<name>SASG_STAA8</name>
<gene>
    <name type="primary">sasG</name>
    <name type="ordered locus">SAOUHSC_02798</name>
</gene>
<evidence type="ECO:0000255" key="1"/>
<evidence type="ECO:0000255" key="2">
    <source>
        <dbReference type="PROSITE-ProRule" id="PRU00437"/>
    </source>
</evidence>
<evidence type="ECO:0000255" key="3">
    <source>
        <dbReference type="PROSITE-ProRule" id="PRU00477"/>
    </source>
</evidence>
<evidence type="ECO:0000256" key="4">
    <source>
        <dbReference type="SAM" id="MobiDB-lite"/>
    </source>
</evidence>
<evidence type="ECO:0000269" key="5">
    <source>
    </source>
</evidence>
<evidence type="ECO:0000269" key="6">
    <source>
    </source>
</evidence>
<evidence type="ECO:0000305" key="7"/>
<evidence type="ECO:0000305" key="8">
    <source>
    </source>
</evidence>
<evidence type="ECO:0007829" key="9">
    <source>
        <dbReference type="PDB" id="3TIQ"/>
    </source>
</evidence>
<evidence type="ECO:0007829" key="10">
    <source>
        <dbReference type="PDB" id="4WVE"/>
    </source>
</evidence>
<evidence type="ECO:0007829" key="11">
    <source>
        <dbReference type="PDB" id="5DBL"/>
    </source>
</evidence>
<evidence type="ECO:0007829" key="12">
    <source>
        <dbReference type="PDB" id="7SMH"/>
    </source>
</evidence>
<protein>
    <recommendedName>
        <fullName>Surface protein G</fullName>
    </recommendedName>
</protein>
<accession>Q2G2B2</accession>
<proteinExistence type="evidence at protein level"/>
<sequence>MRDKKGPVNKRVDFLSNKLNKYSIRKFTVGTASILIGSLMYLGTQQEAEAAENNIENPTTLKDNVQSKEVKIEEVTNKDTAPQGVEAKSEVTSNKDTIEHEPSVKAEDISKKEDTPKEVADVAEVQPKSSVTHNAETPKVRKARSVDEGSFDITRDSKNVVESTPITIQGKEHFEGYGSVDIQKKPTDLGVSEVTRFNVGNESNGLIGALQLKNKIDFSKDFNFKVRVANNHQSNTTGADGWGFLFSKGNAEEYLTNGGILGDKGLVNSGGFKIDTGYIYTSSMDKTEKQAGQGYRGYGAFVKNDSSGNSQMVGENIDKSKTNFLNYADNSTNTSDGKFHGQRLNDVILTYVASTGKMRAEYAGKTWETSITDLGLSKNQAYNFLITSSQRWGLNQGINANGWMRTDLKGSEFTFTPEAPKTITELEKKVEEIPFKKERKFNPDLAPGTEKVTREGQKGEKTITTPTLKNPLTGVIISKGEPKEEITKDPINELTEYGPETIAPGHRDEFDPKLPTGEKEEVPGKPGIKNPETGDVVRPPVDSVTKYGPVKGDSIVEKEEIPFEKERKFNPDLAPGTEKVTREGQKGEKTITTPTLKNPLTGEIISKGESKEEITKDPINELTEYGPETITPGHRDEFDPKLPTGEKEEVPGKPGIKNPETGDVVRPPVDSVTKYGPVKGDSIVEKEEIPFEKERKFNPDLAPGTEKVTREGQKGEKTITTPTLKNPLTGVIISKGEPKEEITKDPINELTEYGPETITPGHRDEFDPKLPTGEKEEVPGKPGIKNPETGDVVRPPVDSVTKYGPVKGDSIVEKEEIPFKKERKFNPDLAPGTEKVTREGQKGEKTITTPTLKNPLTGEIISKGESKEEITKDPINELTEYGPETITPGHRDEFDPKLPTGEKEEVPGKPGIKNPETGDVVRPPVDSVTKYGPVKGDSIVEKEEIPFEKERKFNPDLAPGTEKVTREGQKGEKTITTPTLKNPLTGEIISKGESKEEITKDPINELTEYGPETITPGHRDEFDPKLPTGEKEEVPGKPGIKNPETGDVVRPPVDSVTKYGPVKGDSIVEKEEIPFKKERKFNPDLAPGTEKVTREGQKGEKTITTPTLKNPLTGEIISKGESKEEITKDPINELTEYGPETITPGHRDEFDPKLPTGEKEEVPGKPGIKNPETGDVVRPPVDSVTKYGPVKGDSIVEKEEIPFEKERKFNPDLAPGTEKVTREGQKGEKTITTPTLKNPLTGEIISKGESKEEITKDPINELTEYGPETITPGHRDEFDPKLPTGEKEEVPGKPGIKNPETGDVVRPPVDSVTKYGPVKGDSIVEKEEIPFEKERKFNPDLAPGTEKVTREGQKGEKTITTPTLKNPLTGEIISKGESKEEITKDPVNELTEFGGEKIPQGHKDIFDPNLPTDQTEKVPGKPGIKNPDTGKVIEEPVDDVIKHGPKTGTPETKTVEIPFETKREFNPKLQPGEERVKQEGQPGSKTITTPITVNPLTGEKVGEGQPTEEITKQPVDKIVEFGGEKPKDPKGPENPEKPSRPTHPSGPVNPNNPGLSKDRAKPNGPVHSMDKNDKVKKSKIAKESVANQEKKRAELPKTGLESTQKGLIFSSIIGIAGLMLLARRRKN</sequence>
<feature type="signal peptide" evidence="1">
    <location>
        <begin position="1"/>
        <end position="50"/>
    </location>
</feature>
<feature type="chain" id="PRO_0000323595" description="Surface protein G">
    <location>
        <begin position="51"/>
        <end position="1598"/>
    </location>
</feature>
<feature type="propeptide" id="PRO_0000323596" description="Removed by sortase" evidence="3 8">
    <location>
        <begin position="1599"/>
        <end position="1627"/>
    </location>
</feature>
<feature type="domain" description="G5 1" evidence="2">
    <location>
        <begin position="419"/>
        <end position="501"/>
    </location>
</feature>
<feature type="domain" description="G5 2" evidence="2">
    <location>
        <begin position="547"/>
        <end position="629"/>
    </location>
</feature>
<feature type="domain" description="G5 3" evidence="2">
    <location>
        <begin position="675"/>
        <end position="757"/>
    </location>
</feature>
<feature type="domain" description="G5 4" evidence="2">
    <location>
        <begin position="803"/>
        <end position="885"/>
    </location>
</feature>
<feature type="domain" description="G5 5" evidence="2">
    <location>
        <begin position="931"/>
        <end position="1013"/>
    </location>
</feature>
<feature type="domain" description="G5 6" evidence="2">
    <location>
        <begin position="1059"/>
        <end position="1141"/>
    </location>
</feature>
<feature type="domain" description="G5 7" evidence="2">
    <location>
        <begin position="1187"/>
        <end position="1269"/>
    </location>
</feature>
<feature type="domain" description="G5 8" evidence="2">
    <location>
        <begin position="1315"/>
        <end position="1397"/>
    </location>
</feature>
<feature type="domain" description="G5 9" evidence="2">
    <location>
        <begin position="1443"/>
        <end position="1525"/>
    </location>
</feature>
<feature type="region of interest" description="Ligand binding A region, squamous nasal epithelial cell binding">
    <location>
        <begin position="51"/>
        <end position="418"/>
    </location>
</feature>
<feature type="region of interest" description="Disordered" evidence="4">
    <location>
        <begin position="74"/>
        <end position="143"/>
    </location>
</feature>
<feature type="region of interest" description="Disordered" evidence="4">
    <location>
        <begin position="440"/>
        <end position="467"/>
    </location>
</feature>
<feature type="region of interest" description="Disordered" evidence="4">
    <location>
        <begin position="496"/>
        <end position="1601"/>
    </location>
</feature>
<feature type="short sequence motif" description="YSIRK-G/S signaling motif" evidence="7">
    <location>
        <begin position="22"/>
        <end position="33"/>
    </location>
</feature>
<feature type="short sequence motif" description="LPXTG sorting signal" evidence="3">
    <location>
        <begin position="1595"/>
        <end position="1599"/>
    </location>
</feature>
<feature type="compositionally biased region" description="Basic and acidic residues" evidence="4">
    <location>
        <begin position="96"/>
        <end position="120"/>
    </location>
</feature>
<feature type="compositionally biased region" description="Basic and acidic residues" evidence="4">
    <location>
        <begin position="451"/>
        <end position="461"/>
    </location>
</feature>
<feature type="compositionally biased region" description="Basic and acidic residues" evidence="4">
    <location>
        <begin position="505"/>
        <end position="523"/>
    </location>
</feature>
<feature type="compositionally biased region" description="Basic and acidic residues" evidence="4">
    <location>
        <begin position="554"/>
        <end position="570"/>
    </location>
</feature>
<feature type="compositionally biased region" description="Basic and acidic residues" evidence="4">
    <location>
        <begin position="579"/>
        <end position="589"/>
    </location>
</feature>
<feature type="compositionally biased region" description="Basic and acidic residues" evidence="4">
    <location>
        <begin position="606"/>
        <end position="619"/>
    </location>
</feature>
<feature type="compositionally biased region" description="Basic and acidic residues" evidence="4">
    <location>
        <begin position="633"/>
        <end position="651"/>
    </location>
</feature>
<feature type="compositionally biased region" description="Basic and acidic residues" evidence="4">
    <location>
        <begin position="682"/>
        <end position="698"/>
    </location>
</feature>
<feature type="compositionally biased region" description="Basic and acidic residues" evidence="4">
    <location>
        <begin position="707"/>
        <end position="717"/>
    </location>
</feature>
<feature type="compositionally biased region" description="Basic and acidic residues" evidence="4">
    <location>
        <begin position="736"/>
        <end position="747"/>
    </location>
</feature>
<feature type="compositionally biased region" description="Basic and acidic residues" evidence="4">
    <location>
        <begin position="761"/>
        <end position="779"/>
    </location>
</feature>
<feature type="compositionally biased region" description="Basic and acidic residues" evidence="4">
    <location>
        <begin position="810"/>
        <end position="826"/>
    </location>
</feature>
<feature type="compositionally biased region" description="Basic and acidic residues" evidence="4">
    <location>
        <begin position="835"/>
        <end position="845"/>
    </location>
</feature>
<feature type="compositionally biased region" description="Basic and acidic residues" evidence="4">
    <location>
        <begin position="862"/>
        <end position="875"/>
    </location>
</feature>
<feature type="compositionally biased region" description="Basic and acidic residues" evidence="4">
    <location>
        <begin position="889"/>
        <end position="907"/>
    </location>
</feature>
<feature type="compositionally biased region" description="Basic and acidic residues" evidence="4">
    <location>
        <begin position="938"/>
        <end position="954"/>
    </location>
</feature>
<feature type="compositionally biased region" description="Basic and acidic residues" evidence="4">
    <location>
        <begin position="963"/>
        <end position="973"/>
    </location>
</feature>
<feature type="compositionally biased region" description="Basic and acidic residues" evidence="4">
    <location>
        <begin position="990"/>
        <end position="1003"/>
    </location>
</feature>
<feature type="compositionally biased region" description="Basic and acidic residues" evidence="4">
    <location>
        <begin position="1017"/>
        <end position="1035"/>
    </location>
</feature>
<feature type="compositionally biased region" description="Basic and acidic residues" evidence="4">
    <location>
        <begin position="1066"/>
        <end position="1082"/>
    </location>
</feature>
<feature type="compositionally biased region" description="Basic and acidic residues" evidence="4">
    <location>
        <begin position="1091"/>
        <end position="1101"/>
    </location>
</feature>
<feature type="compositionally biased region" description="Basic and acidic residues" evidence="4">
    <location>
        <begin position="1118"/>
        <end position="1131"/>
    </location>
</feature>
<feature type="compositionally biased region" description="Basic and acidic residues" evidence="4">
    <location>
        <begin position="1145"/>
        <end position="1163"/>
    </location>
</feature>
<feature type="compositionally biased region" description="Basic and acidic residues" evidence="4">
    <location>
        <begin position="1194"/>
        <end position="1210"/>
    </location>
</feature>
<feature type="compositionally biased region" description="Basic and acidic residues" evidence="4">
    <location>
        <begin position="1219"/>
        <end position="1229"/>
    </location>
</feature>
<feature type="compositionally biased region" description="Basic and acidic residues" evidence="4">
    <location>
        <begin position="1246"/>
        <end position="1259"/>
    </location>
</feature>
<feature type="compositionally biased region" description="Basic and acidic residues" evidence="4">
    <location>
        <begin position="1273"/>
        <end position="1291"/>
    </location>
</feature>
<feature type="compositionally biased region" description="Basic and acidic residues" evidence="4">
    <location>
        <begin position="1322"/>
        <end position="1338"/>
    </location>
</feature>
<feature type="compositionally biased region" description="Basic and acidic residues" evidence="4">
    <location>
        <begin position="1347"/>
        <end position="1357"/>
    </location>
</feature>
<feature type="compositionally biased region" description="Basic and acidic residues" evidence="4">
    <location>
        <begin position="1374"/>
        <end position="1387"/>
    </location>
</feature>
<feature type="compositionally biased region" description="Basic and acidic residues" evidence="4">
    <location>
        <begin position="1431"/>
        <end position="1442"/>
    </location>
</feature>
<feature type="compositionally biased region" description="Basic and acidic residues" evidence="4">
    <location>
        <begin position="1459"/>
        <end position="1478"/>
    </location>
</feature>
<feature type="compositionally biased region" description="Polar residues" evidence="4">
    <location>
        <begin position="1481"/>
        <end position="1495"/>
    </location>
</feature>
<feature type="compositionally biased region" description="Basic and acidic residues" evidence="4">
    <location>
        <begin position="1509"/>
        <end position="1539"/>
    </location>
</feature>
<feature type="modified residue" description="Pentaglycyl murein peptidoglycan amidated threonine" evidence="3">
    <location>
        <position position="1598"/>
    </location>
</feature>
<feature type="strand" evidence="12">
    <location>
        <begin position="166"/>
        <end position="168"/>
    </location>
</feature>
<feature type="helix" evidence="12">
    <location>
        <begin position="171"/>
        <end position="173"/>
    </location>
</feature>
<feature type="strand" evidence="12">
    <location>
        <begin position="174"/>
        <end position="184"/>
    </location>
</feature>
<feature type="turn" evidence="12">
    <location>
        <begin position="187"/>
        <end position="189"/>
    </location>
</feature>
<feature type="strand" evidence="12">
    <location>
        <begin position="191"/>
        <end position="198"/>
    </location>
</feature>
<feature type="strand" evidence="12">
    <location>
        <begin position="206"/>
        <end position="214"/>
    </location>
</feature>
<feature type="strand" evidence="12">
    <location>
        <begin position="222"/>
        <end position="229"/>
    </location>
</feature>
<feature type="turn" evidence="12">
    <location>
        <begin position="235"/>
        <end position="237"/>
    </location>
</feature>
<feature type="strand" evidence="12">
    <location>
        <begin position="241"/>
        <end position="249"/>
    </location>
</feature>
<feature type="helix" evidence="12">
    <location>
        <begin position="251"/>
        <end position="257"/>
    </location>
</feature>
<feature type="strand" evidence="12">
    <location>
        <begin position="260"/>
        <end position="264"/>
    </location>
</feature>
<feature type="strand" evidence="12">
    <location>
        <begin position="266"/>
        <end position="275"/>
    </location>
</feature>
<feature type="helix" evidence="12">
    <location>
        <begin position="283"/>
        <end position="287"/>
    </location>
</feature>
<feature type="strand" evidence="12">
    <location>
        <begin position="292"/>
        <end position="304"/>
    </location>
</feature>
<feature type="strand" evidence="12">
    <location>
        <begin position="309"/>
        <end position="316"/>
    </location>
</feature>
<feature type="strand" evidence="12">
    <location>
        <begin position="324"/>
        <end position="327"/>
    </location>
</feature>
<feature type="strand" evidence="12">
    <location>
        <begin position="336"/>
        <end position="338"/>
    </location>
</feature>
<feature type="strand" evidence="12">
    <location>
        <begin position="345"/>
        <end position="351"/>
    </location>
</feature>
<feature type="turn" evidence="12">
    <location>
        <begin position="353"/>
        <end position="355"/>
    </location>
</feature>
<feature type="strand" evidence="12">
    <location>
        <begin position="357"/>
        <end position="362"/>
    </location>
</feature>
<feature type="strand" evidence="12">
    <location>
        <begin position="365"/>
        <end position="370"/>
    </location>
</feature>
<feature type="helix" evidence="12">
    <location>
        <begin position="372"/>
        <end position="374"/>
    </location>
</feature>
<feature type="strand" evidence="12">
    <location>
        <begin position="381"/>
        <end position="391"/>
    </location>
</feature>
<feature type="strand" evidence="12">
    <location>
        <begin position="404"/>
        <end position="415"/>
    </location>
</feature>
<feature type="strand" evidence="9">
    <location>
        <begin position="423"/>
        <end position="433"/>
    </location>
</feature>
<feature type="strand" evidence="9">
    <location>
        <begin position="437"/>
        <end position="441"/>
    </location>
</feature>
<feature type="strand" evidence="9">
    <location>
        <begin position="450"/>
        <end position="454"/>
    </location>
</feature>
<feature type="strand" evidence="9">
    <location>
        <begin position="459"/>
        <end position="469"/>
    </location>
</feature>
<feature type="turn" evidence="9">
    <location>
        <begin position="471"/>
        <end position="473"/>
    </location>
</feature>
<feature type="strand" evidence="9">
    <location>
        <begin position="476"/>
        <end position="479"/>
    </location>
</feature>
<feature type="strand" evidence="9">
    <location>
        <begin position="483"/>
        <end position="488"/>
    </location>
</feature>
<feature type="strand" evidence="9">
    <location>
        <begin position="493"/>
        <end position="497"/>
    </location>
</feature>
<feature type="strand" evidence="9">
    <location>
        <begin position="500"/>
        <end position="502"/>
    </location>
</feature>
<feature type="strand" evidence="11">
    <location>
        <begin position="506"/>
        <end position="510"/>
    </location>
</feature>
<feature type="strand" evidence="11">
    <location>
        <begin position="519"/>
        <end position="522"/>
    </location>
</feature>
<feature type="strand" evidence="11">
    <location>
        <begin position="527"/>
        <end position="529"/>
    </location>
</feature>
<feature type="turn" evidence="11">
    <location>
        <begin position="531"/>
        <end position="533"/>
    </location>
</feature>
<feature type="strand" evidence="11">
    <location>
        <begin position="536"/>
        <end position="538"/>
    </location>
</feature>
<feature type="strand" evidence="11">
    <location>
        <begin position="543"/>
        <end position="547"/>
    </location>
</feature>
<feature type="strand" evidence="10">
    <location>
        <begin position="555"/>
        <end position="561"/>
    </location>
</feature>
<feature type="strand" evidence="10">
    <location>
        <begin position="565"/>
        <end position="569"/>
    </location>
</feature>
<feature type="strand" evidence="10">
    <location>
        <begin position="578"/>
        <end position="582"/>
    </location>
</feature>
<feature type="strand" evidence="10">
    <location>
        <begin position="587"/>
        <end position="593"/>
    </location>
</feature>
<feature type="strand" evidence="10">
    <location>
        <begin position="595"/>
        <end position="597"/>
    </location>
</feature>
<feature type="turn" evidence="10">
    <location>
        <begin position="599"/>
        <end position="601"/>
    </location>
</feature>
<feature type="strand" evidence="10">
    <location>
        <begin position="604"/>
        <end position="607"/>
    </location>
</feature>
<feature type="strand" evidence="10">
    <location>
        <begin position="611"/>
        <end position="616"/>
    </location>
</feature>
<feature type="strand" evidence="10">
    <location>
        <begin position="621"/>
        <end position="625"/>
    </location>
</feature>
<feature type="strand" evidence="10">
    <location>
        <begin position="628"/>
        <end position="630"/>
    </location>
</feature>
<feature type="strand" evidence="10">
    <location>
        <begin position="634"/>
        <end position="638"/>
    </location>
</feature>
<feature type="strand" evidence="10">
    <location>
        <begin position="647"/>
        <end position="650"/>
    </location>
</feature>
<feature type="strand" evidence="10">
    <location>
        <begin position="655"/>
        <end position="657"/>
    </location>
</feature>
<feature type="turn" evidence="10">
    <location>
        <begin position="659"/>
        <end position="661"/>
    </location>
</feature>
<feature type="strand" evidence="10">
    <location>
        <begin position="664"/>
        <end position="666"/>
    </location>
</feature>
<feature type="strand" evidence="10">
    <location>
        <begin position="671"/>
        <end position="675"/>
    </location>
</feature>
<feature type="strand" evidence="10">
    <location>
        <begin position="683"/>
        <end position="689"/>
    </location>
</feature>
<feature type="strand" evidence="10">
    <location>
        <begin position="693"/>
        <end position="697"/>
    </location>
</feature>
<feature type="strand" evidence="10">
    <location>
        <begin position="706"/>
        <end position="710"/>
    </location>
</feature>
<feature type="strand" evidence="10">
    <location>
        <begin position="715"/>
        <end position="721"/>
    </location>
</feature>
<feature type="strand" evidence="10">
    <location>
        <begin position="723"/>
        <end position="725"/>
    </location>
</feature>
<feature type="turn" evidence="10">
    <location>
        <begin position="727"/>
        <end position="729"/>
    </location>
</feature>
<feature type="strand" evidence="10">
    <location>
        <begin position="732"/>
        <end position="735"/>
    </location>
</feature>
<feature type="strand" evidence="10">
    <location>
        <begin position="739"/>
        <end position="744"/>
    </location>
</feature>
<feature type="strand" evidence="10">
    <location>
        <begin position="749"/>
        <end position="753"/>
    </location>
</feature>
<dbReference type="EMBL" id="CP000253">
    <property type="protein sequence ID" value="ABD31801.1"/>
    <property type="molecule type" value="Genomic_DNA"/>
</dbReference>
<dbReference type="RefSeq" id="WP_001205091.1">
    <property type="nucleotide sequence ID" value="NC_007795.1"/>
</dbReference>
<dbReference type="RefSeq" id="YP_501257.1">
    <property type="nucleotide sequence ID" value="NC_007795.1"/>
</dbReference>
<dbReference type="PDB" id="3TIP">
    <property type="method" value="X-ray"/>
    <property type="resolution" value="1.70 A"/>
    <property type="chains" value="A=502-629"/>
</dbReference>
<dbReference type="PDB" id="3TIQ">
    <property type="method" value="X-ray"/>
    <property type="resolution" value="1.87 A"/>
    <property type="chains" value="A/B=419-629"/>
</dbReference>
<dbReference type="PDB" id="4WVE">
    <property type="method" value="X-ray"/>
    <property type="resolution" value="1.60 A"/>
    <property type="chains" value="A/B=545-757"/>
</dbReference>
<dbReference type="PDB" id="5DBL">
    <property type="method" value="X-ray"/>
    <property type="resolution" value="1.60 A"/>
    <property type="chains" value="A=502-629"/>
</dbReference>
<dbReference type="PDB" id="7SMH">
    <property type="method" value="X-ray"/>
    <property type="resolution" value="1.65 A"/>
    <property type="chains" value="A/B/C/D=144-423"/>
</dbReference>
<dbReference type="PDB" id="8G1M">
    <property type="method" value="X-ray"/>
    <property type="resolution" value="1.93 A"/>
    <property type="chains" value="A=164-418"/>
</dbReference>
<dbReference type="PDBsum" id="3TIP"/>
<dbReference type="PDBsum" id="3TIQ"/>
<dbReference type="PDBsum" id="4WVE"/>
<dbReference type="PDBsum" id="5DBL"/>
<dbReference type="PDBsum" id="7SMH"/>
<dbReference type="PDBsum" id="8G1M"/>
<dbReference type="SASBDB" id="Q2G2B2"/>
<dbReference type="SMR" id="Q2G2B2"/>
<dbReference type="STRING" id="93061.SAOUHSC_02798"/>
<dbReference type="UniLectin" id="Q2G2B2"/>
<dbReference type="PaxDb" id="1280-SAXN108_2744"/>
<dbReference type="GeneID" id="3921452"/>
<dbReference type="KEGG" id="sao:SAOUHSC_02798"/>
<dbReference type="PATRIC" id="fig|93061.5.peg.2530"/>
<dbReference type="eggNOG" id="COG3583">
    <property type="taxonomic scope" value="Bacteria"/>
</dbReference>
<dbReference type="HOGENOM" id="CLU_000977_4_0_9"/>
<dbReference type="OrthoDB" id="2414523at2"/>
<dbReference type="EvolutionaryTrace" id="Q2G2B2"/>
<dbReference type="Proteomes" id="UP000008816">
    <property type="component" value="Chromosome"/>
</dbReference>
<dbReference type="GO" id="GO:0005576">
    <property type="term" value="C:extracellular region"/>
    <property type="evidence" value="ECO:0007669"/>
    <property type="project" value="UniProtKB-KW"/>
</dbReference>
<dbReference type="GO" id="GO:0090609">
    <property type="term" value="P:single-species submerged biofilm formation"/>
    <property type="evidence" value="ECO:0000314"/>
    <property type="project" value="CACAO"/>
</dbReference>
<dbReference type="Gene3D" id="2.20.230.30">
    <property type="match status" value="4"/>
</dbReference>
<dbReference type="Gene3D" id="2.60.120.200">
    <property type="match status" value="1"/>
</dbReference>
<dbReference type="Gene3D" id="2.20.230.10">
    <property type="entry name" value="Resuscitation-promoting factor rpfb"/>
    <property type="match status" value="2"/>
</dbReference>
<dbReference type="InterPro" id="IPR011098">
    <property type="entry name" value="G5_dom"/>
</dbReference>
<dbReference type="InterPro" id="IPR050436">
    <property type="entry name" value="IsdA"/>
</dbReference>
<dbReference type="InterPro" id="IPR019931">
    <property type="entry name" value="LPXTG_anchor"/>
</dbReference>
<dbReference type="InterPro" id="IPR031477">
    <property type="entry name" value="SasG_E"/>
</dbReference>
<dbReference type="InterPro" id="IPR005877">
    <property type="entry name" value="YSIRK_signal_dom"/>
</dbReference>
<dbReference type="NCBIfam" id="TIGR01167">
    <property type="entry name" value="LPXTG_anchor"/>
    <property type="match status" value="1"/>
</dbReference>
<dbReference type="NCBIfam" id="TIGR01168">
    <property type="entry name" value="YSIRK_signal"/>
    <property type="match status" value="1"/>
</dbReference>
<dbReference type="PANTHER" id="PTHR37824">
    <property type="entry name" value="IRON-REGULATED SURFACE DETERMINANT PROTEIN C"/>
    <property type="match status" value="1"/>
</dbReference>
<dbReference type="PANTHER" id="PTHR37824:SF1">
    <property type="entry name" value="IRON-REGULATED SURFACE DETERMINANT PROTEIN C"/>
    <property type="match status" value="1"/>
</dbReference>
<dbReference type="Pfam" id="PF07501">
    <property type="entry name" value="G5"/>
    <property type="match status" value="9"/>
</dbReference>
<dbReference type="Pfam" id="PF00746">
    <property type="entry name" value="Gram_pos_anchor"/>
    <property type="match status" value="1"/>
</dbReference>
<dbReference type="Pfam" id="PF17041">
    <property type="entry name" value="SasG_E"/>
    <property type="match status" value="8"/>
</dbReference>
<dbReference type="Pfam" id="PF04650">
    <property type="entry name" value="YSIRK_signal"/>
    <property type="match status" value="1"/>
</dbReference>
<dbReference type="SMART" id="SM01208">
    <property type="entry name" value="G5"/>
    <property type="match status" value="9"/>
</dbReference>
<dbReference type="PROSITE" id="PS51109">
    <property type="entry name" value="G5"/>
    <property type="match status" value="9"/>
</dbReference>
<dbReference type="PROSITE" id="PS50847">
    <property type="entry name" value="GRAM_POS_ANCHORING"/>
    <property type="match status" value="1"/>
</dbReference>
<comment type="function">
    <text evidence="5 6">Promotes adhesion of bacterial cells to human squamous nasal epithelial cells, a phenomenon which is likely to be important in nasal colonization. Forms short, extremely dense and thin fibrils all over the bacterial surface. Does not bind to either buccal cells or non-differentiated keratinocytes. Promotes cellular aggregation leading to biofilm formation.</text>
</comment>
<comment type="subcellular location">
    <subcellularLocation>
        <location evidence="3 8">Secreted</location>
        <location evidence="3 8">Cell wall</location>
        <topology evidence="3 8">Peptidoglycan-anchor</topology>
    </subcellularLocation>
    <text evidence="8">Anchored to the cell wall by sortase A.</text>
</comment>
<comment type="miscellaneous">
    <text>Produced during infection of the human host. Does not bind to immobilized fibrinogen, fibronectin, IgG, human epidermal keratin, collagen, vWF, laminin, heparan sulfate and submaxillary mucin.</text>
</comment>
<comment type="miscellaneous">
    <text>When sasG is expressed at high levels, it inhibits adhesion of S.aureus to the ligands fibrinogen, fibronectin, cytokeratin 10 and IgG. This inhibitory effect depends on the number of G5 repeats present in the protein, since shorter variants do not present this phenotype.</text>
</comment>
<comment type="miscellaneous">
    <text>Biofilm formation is ica-independent, relying only on the level of expression of the protein and the number of G5 repeats.</text>
</comment>
<keyword id="KW-0002">3D-structure</keyword>
<keyword id="KW-0134">Cell wall</keyword>
<keyword id="KW-0572">Peptidoglycan-anchor</keyword>
<keyword id="KW-1185">Reference proteome</keyword>
<keyword id="KW-0677">Repeat</keyword>
<keyword id="KW-0964">Secreted</keyword>
<keyword id="KW-0732">Signal</keyword>
<keyword id="KW-0843">Virulence</keyword>
<reference key="1">
    <citation type="book" date="2006" name="Gram positive pathogens, 2nd edition">
        <title>The Staphylococcus aureus NCTC 8325 genome.</title>
        <editorList>
            <person name="Fischetti V."/>
            <person name="Novick R."/>
            <person name="Ferretti J."/>
            <person name="Portnoy D."/>
            <person name="Rood J."/>
        </editorList>
        <authorList>
            <person name="Gillaspy A.F."/>
            <person name="Worrell V."/>
            <person name="Orvis J."/>
            <person name="Roe B.A."/>
            <person name="Dyer D.W."/>
            <person name="Iandolo J.J."/>
        </authorList>
    </citation>
    <scope>NUCLEOTIDE SEQUENCE [LARGE SCALE GENOMIC DNA]</scope>
    <source>
        <strain>NCTC 8325 / PS 47</strain>
    </source>
</reference>
<reference key="2">
    <citation type="journal article" date="2002" name="Proc. Natl. Acad. Sci. U.S.A.">
        <title>An iron-regulated sortase anchors a class of surface protein during Staphylococcus aureus pathogenesis.</title>
        <authorList>
            <person name="Mazmanian S.K."/>
            <person name="Ton-That H."/>
            <person name="Su K."/>
            <person name="Schneewind O."/>
        </authorList>
    </citation>
    <scope>SUBCELLULAR LOCATION</scope>
    <scope>PROCESSING BY SORTASE A</scope>
    <source>
        <strain>RN4220</strain>
    </source>
</reference>
<reference key="3">
    <citation type="journal article" date="2003" name="Microbiology">
        <title>Characterization of novel LPXTG-containing proteins of Staphylococcus aureus identified from genome sequences.</title>
        <authorList>
            <person name="Roche F.M."/>
            <person name="Massey R."/>
            <person name="Peacock S.J."/>
            <person name="Day N.P.J."/>
            <person name="Visai L."/>
            <person name="Speziale P."/>
            <person name="Lam A."/>
            <person name="Pallen M."/>
            <person name="Foster T.J."/>
        </authorList>
    </citation>
    <scope>INVOLVEMENT IN HUMAN INFECTION</scope>
</reference>
<reference key="4">
    <citation type="journal article" date="2003" name="Microbiology">
        <title>The Staphylococcus aureus surface protein sasG and its homologues promote bacterial adherence to human desquamated nasal epithelial cells.</title>
        <authorList>
            <person name="Roche F.M."/>
            <person name="Meehan M."/>
            <person name="Foster T.J."/>
        </authorList>
    </citation>
    <scope>FUNCTION IN NASAL COLONIZATION</scope>
</reference>
<reference key="5">
    <citation type="journal article" date="2007" name="Microbiology">
        <title>The role of Staphylococcus aureus surface protein sasG in adherence and biofilm formation.</title>
        <authorList>
            <person name="Corrigan R.M."/>
            <person name="Rigby D."/>
            <person name="Handley P."/>
            <person name="Foster T.J."/>
        </authorList>
    </citation>
    <scope>FUNCTION IN BIOFILM FORMATION</scope>
    <scope>MORPHOLOGY</scope>
</reference>
<organism>
    <name type="scientific">Staphylococcus aureus (strain NCTC 8325 / PS 47)</name>
    <dbReference type="NCBI Taxonomy" id="93061"/>
    <lineage>
        <taxon>Bacteria</taxon>
        <taxon>Bacillati</taxon>
        <taxon>Bacillota</taxon>
        <taxon>Bacilli</taxon>
        <taxon>Bacillales</taxon>
        <taxon>Staphylococcaceae</taxon>
        <taxon>Staphylococcus</taxon>
    </lineage>
</organism>